<proteinExistence type="evidence at protein level"/>
<reference key="1">
    <citation type="journal article" date="2003" name="Nat. Genet.">
        <title>Positional cloning of a novel gene influencing asthma from chromosome 2q14.</title>
        <authorList>
            <person name="Allen M."/>
            <person name="Heinzmann A."/>
            <person name="Noguchi E."/>
            <person name="Abecasis G."/>
            <person name="Broxholme J."/>
            <person name="Ponting C.P."/>
            <person name="Bhattacharyya S."/>
            <person name="Tinsley J."/>
            <person name="Zhang Y."/>
            <person name="Holt R."/>
            <person name="Jones E.Y."/>
            <person name="Lench N."/>
            <person name="Carey A."/>
            <person name="Jones H."/>
            <person name="Dickens N.J."/>
            <person name="Dimon C."/>
            <person name="Nicholls R."/>
            <person name="Baker C."/>
            <person name="Xue L."/>
            <person name="Townsend E."/>
            <person name="Kabesch M."/>
            <person name="Weiland S.K."/>
            <person name="Carr D."/>
            <person name="von Mutius E."/>
            <person name="Adcock I.M."/>
            <person name="Barnes P.J."/>
            <person name="Lathrop G.M."/>
            <person name="Edwards M."/>
            <person name="Moffatt M.F."/>
            <person name="Cookson W.O.C.M."/>
        </authorList>
    </citation>
    <scope>NUCLEOTIDE SEQUENCE [MRNA]</scope>
</reference>
<reference key="2">
    <citation type="journal article" date="2004" name="Genome Res.">
        <title>The status, quality, and expansion of the NIH full-length cDNA project: the Mammalian Gene Collection (MGC).</title>
        <authorList>
            <consortium name="The MGC Project Team"/>
        </authorList>
    </citation>
    <scope>NUCLEOTIDE SEQUENCE [LARGE SCALE MRNA]</scope>
    <source>
        <strain>C57BL/6J</strain>
        <tissue>Brain</tissue>
        <tissue>Eye</tissue>
    </source>
</reference>
<reference key="3">
    <citation type="journal article" date="2005" name="J. Biol. Chem.">
        <title>DPP10 modulates Kv4-mediated A-type potassium channels.</title>
        <authorList>
            <person name="Zagha E."/>
            <person name="Ozaita A."/>
            <person name="Chang S.Y."/>
            <person name="Nadal M.S."/>
            <person name="Lin U."/>
            <person name="Saganich M.J."/>
            <person name="McCormack T."/>
            <person name="Akinsanya K.O."/>
            <person name="Qi S.Y."/>
            <person name="Rudy B."/>
        </authorList>
    </citation>
    <scope>TISSUE SPECIFICITY</scope>
</reference>
<reference key="4">
    <citation type="journal article" date="2010" name="Cell">
        <title>A tissue-specific atlas of mouse protein phosphorylation and expression.</title>
        <authorList>
            <person name="Huttlin E.L."/>
            <person name="Jedrychowski M.P."/>
            <person name="Elias J.E."/>
            <person name="Goswami T."/>
            <person name="Rad R."/>
            <person name="Beausoleil S.A."/>
            <person name="Villen J."/>
            <person name="Haas W."/>
            <person name="Sowa M.E."/>
            <person name="Gygi S.P."/>
        </authorList>
    </citation>
    <scope>IDENTIFICATION BY MASS SPECTROMETRY [LARGE SCALE ANALYSIS]</scope>
    <source>
        <tissue>Brain</tissue>
    </source>
</reference>
<reference key="5">
    <citation type="journal article" date="2012" name="J. Biol. Chem.">
        <title>Augmentation of Kv4.2-encoded currents by accessory dipeptidyl peptidase 6 and 10 subunits reflects selective cell surface Kv4.2 protein stabilization.</title>
        <authorList>
            <person name="Foeger N.C."/>
            <person name="Norris A.J."/>
            <person name="Wren L.M."/>
            <person name="Nerbonne J.M."/>
        </authorList>
    </citation>
    <scope>FUNCTION</scope>
    <scope>SUBCELLULAR LOCATION</scope>
    <scope>TISSUE SPECIFICITY</scope>
</reference>
<gene>
    <name type="primary">Dpp10</name>
</gene>
<feature type="chain" id="PRO_0000122418" description="Inactive dipeptidyl peptidase 10">
    <location>
        <begin position="1"/>
        <end position="797"/>
    </location>
</feature>
<feature type="topological domain" description="Cytoplasmic" evidence="2">
    <location>
        <begin position="1"/>
        <end position="34"/>
    </location>
</feature>
<feature type="transmembrane region" description="Helical; Signal-anchor for type II membrane protein" evidence="2">
    <location>
        <begin position="35"/>
        <end position="55"/>
    </location>
</feature>
<feature type="topological domain" description="Extracellular" evidence="2">
    <location>
        <begin position="56"/>
        <end position="797"/>
    </location>
</feature>
<feature type="region of interest" description="Disordered" evidence="3">
    <location>
        <begin position="1"/>
        <end position="28"/>
    </location>
</feature>
<feature type="modified residue" description="Phosphotyrosine" evidence="1">
    <location>
        <position position="139"/>
    </location>
</feature>
<feature type="modified residue" description="Phosphotyrosine" evidence="1">
    <location>
        <position position="144"/>
    </location>
</feature>
<feature type="glycosylation site" description="N-linked (GlcNAc...) asparagine" evidence="2">
    <location>
        <position position="64"/>
    </location>
</feature>
<feature type="glycosylation site" description="N-linked (GlcNAc...) asparagine" evidence="2">
    <location>
        <position position="91"/>
    </location>
</feature>
<feature type="glycosylation site" description="N-linked (GlcNAc...) asparagine" evidence="2">
    <location>
        <position position="112"/>
    </location>
</feature>
<feature type="glycosylation site" description="N-linked (GlcNAc...) asparagine" evidence="2">
    <location>
        <position position="120"/>
    </location>
</feature>
<feature type="glycosylation site" description="N-linked (GlcNAc...) asparagine" evidence="2">
    <location>
        <position position="258"/>
    </location>
</feature>
<feature type="glycosylation site" description="N-linked (GlcNAc...) asparagine" evidence="2">
    <location>
        <position position="343"/>
    </location>
</feature>
<feature type="glycosylation site" description="N-linked (GlcNAc...) asparagine" evidence="2">
    <location>
        <position position="518"/>
    </location>
</feature>
<feature type="glycosylation site" description="N-linked (GlcNAc...) asparagine" evidence="2">
    <location>
        <position position="749"/>
    </location>
</feature>
<dbReference type="EMBL" id="BC029696">
    <property type="protein sequence ID" value="AAH29696.1"/>
    <property type="molecule type" value="mRNA"/>
</dbReference>
<dbReference type="EMBL" id="BC063074">
    <property type="protein sequence ID" value="AAH63074.1"/>
    <property type="status" value="ALT_INIT"/>
    <property type="molecule type" value="mRNA"/>
</dbReference>
<dbReference type="EMBL" id="BC067026">
    <property type="protein sequence ID" value="AAH67026.1"/>
    <property type="molecule type" value="mRNA"/>
</dbReference>
<dbReference type="RefSeq" id="NP_950186.3">
    <property type="nucleotide sequence ID" value="NM_199021.3"/>
</dbReference>
<dbReference type="SMR" id="Q6NXK7"/>
<dbReference type="BioGRID" id="234607">
    <property type="interactions" value="7"/>
</dbReference>
<dbReference type="FunCoup" id="Q6NXK7">
    <property type="interactions" value="210"/>
</dbReference>
<dbReference type="STRING" id="10090.ENSMUSP00000108225"/>
<dbReference type="ESTHER" id="mouse-dpp10">
    <property type="family name" value="DPP4N_Peptidase_S9"/>
</dbReference>
<dbReference type="MEROPS" id="S09.974"/>
<dbReference type="GlyConnect" id="2385">
    <property type="glycosylation" value="8 N-Linked glycans (5 sites)"/>
</dbReference>
<dbReference type="GlyCosmos" id="Q6NXK7">
    <property type="glycosylation" value="8 sites, 8 glycans"/>
</dbReference>
<dbReference type="GlyGen" id="Q6NXK7">
    <property type="glycosylation" value="10 sites, 13 N-linked glycans (7 sites), 1 O-linked glycan (1 site)"/>
</dbReference>
<dbReference type="iPTMnet" id="Q6NXK7"/>
<dbReference type="PhosphoSitePlus" id="Q6NXK7"/>
<dbReference type="SwissPalm" id="Q6NXK7"/>
<dbReference type="PaxDb" id="10090-ENSMUSP00000108225"/>
<dbReference type="ProteomicsDB" id="277599"/>
<dbReference type="DNASU" id="269109"/>
<dbReference type="GeneID" id="269109"/>
<dbReference type="KEGG" id="mmu:269109"/>
<dbReference type="AGR" id="MGI:2442409"/>
<dbReference type="CTD" id="57628"/>
<dbReference type="MGI" id="MGI:2442409">
    <property type="gene designation" value="Dpp10"/>
</dbReference>
<dbReference type="eggNOG" id="KOG2100">
    <property type="taxonomic scope" value="Eukaryota"/>
</dbReference>
<dbReference type="InParanoid" id="Q6NXK7"/>
<dbReference type="OrthoDB" id="16520at2759"/>
<dbReference type="PhylomeDB" id="Q6NXK7"/>
<dbReference type="BioGRID-ORCS" id="269109">
    <property type="hits" value="1 hit in 76 CRISPR screens"/>
</dbReference>
<dbReference type="CD-CODE" id="CE726F99">
    <property type="entry name" value="Postsynaptic density"/>
</dbReference>
<dbReference type="ChiTaRS" id="Dpp10">
    <property type="organism name" value="mouse"/>
</dbReference>
<dbReference type="PRO" id="PR:Q6NXK7"/>
<dbReference type="Proteomes" id="UP000000589">
    <property type="component" value="Unplaced"/>
</dbReference>
<dbReference type="RNAct" id="Q6NXK7">
    <property type="molecule type" value="protein"/>
</dbReference>
<dbReference type="GO" id="GO:0016020">
    <property type="term" value="C:membrane"/>
    <property type="evidence" value="ECO:0000266"/>
    <property type="project" value="MGI"/>
</dbReference>
<dbReference type="GO" id="GO:0005886">
    <property type="term" value="C:plasma membrane"/>
    <property type="evidence" value="ECO:0000314"/>
    <property type="project" value="UniProtKB"/>
</dbReference>
<dbReference type="GO" id="GO:0008076">
    <property type="term" value="C:voltage-gated potassium channel complex"/>
    <property type="evidence" value="ECO:0000314"/>
    <property type="project" value="UniProtKB"/>
</dbReference>
<dbReference type="GO" id="GO:0015459">
    <property type="term" value="F:potassium channel regulator activity"/>
    <property type="evidence" value="ECO:0000314"/>
    <property type="project" value="UniProtKB"/>
</dbReference>
<dbReference type="GO" id="GO:0008236">
    <property type="term" value="F:serine-type peptidase activity"/>
    <property type="evidence" value="ECO:0007669"/>
    <property type="project" value="InterPro"/>
</dbReference>
<dbReference type="GO" id="GO:0072659">
    <property type="term" value="P:protein localization to plasma membrane"/>
    <property type="evidence" value="ECO:0000314"/>
    <property type="project" value="UniProtKB"/>
</dbReference>
<dbReference type="GO" id="GO:0006508">
    <property type="term" value="P:proteolysis"/>
    <property type="evidence" value="ECO:0007669"/>
    <property type="project" value="InterPro"/>
</dbReference>
<dbReference type="GO" id="GO:1901379">
    <property type="term" value="P:regulation of potassium ion transmembrane transport"/>
    <property type="evidence" value="ECO:0000314"/>
    <property type="project" value="UniProtKB"/>
</dbReference>
<dbReference type="FunFam" id="3.40.50.1820:FF:000003">
    <property type="entry name" value="Dipeptidyl peptidase 4"/>
    <property type="match status" value="1"/>
</dbReference>
<dbReference type="Gene3D" id="3.40.50.1820">
    <property type="entry name" value="alpha/beta hydrolase"/>
    <property type="match status" value="1"/>
</dbReference>
<dbReference type="Gene3D" id="2.140.10.30">
    <property type="entry name" value="Dipeptidylpeptidase IV, N-terminal domain"/>
    <property type="match status" value="1"/>
</dbReference>
<dbReference type="InterPro" id="IPR029058">
    <property type="entry name" value="AB_hydrolase_fold"/>
</dbReference>
<dbReference type="InterPro" id="IPR001375">
    <property type="entry name" value="Peptidase_S9_cat"/>
</dbReference>
<dbReference type="InterPro" id="IPR002469">
    <property type="entry name" value="Peptidase_S9B_N"/>
</dbReference>
<dbReference type="InterPro" id="IPR050278">
    <property type="entry name" value="Serine_Prot_S9B/DPPIV"/>
</dbReference>
<dbReference type="PANTHER" id="PTHR11731:SF21">
    <property type="entry name" value="INACTIVE DIPEPTIDYL PEPTIDASE 10"/>
    <property type="match status" value="1"/>
</dbReference>
<dbReference type="PANTHER" id="PTHR11731">
    <property type="entry name" value="PROTEASE FAMILY S9B,C DIPEPTIDYL-PEPTIDASE IV-RELATED"/>
    <property type="match status" value="1"/>
</dbReference>
<dbReference type="Pfam" id="PF00930">
    <property type="entry name" value="DPPIV_N"/>
    <property type="match status" value="1"/>
</dbReference>
<dbReference type="Pfam" id="PF00326">
    <property type="entry name" value="Peptidase_S9"/>
    <property type="match status" value="1"/>
</dbReference>
<dbReference type="SUPFAM" id="SSF53474">
    <property type="entry name" value="alpha/beta-Hydrolases"/>
    <property type="match status" value="1"/>
</dbReference>
<dbReference type="SUPFAM" id="SSF82171">
    <property type="entry name" value="DPP6 N-terminal domain-like"/>
    <property type="match status" value="1"/>
</dbReference>
<accession>Q6NXK7</accession>
<accession>Q6P554</accession>
<accession>Q8K1H0</accession>
<name>DPP10_MOUSE</name>
<protein>
    <recommendedName>
        <fullName>Inactive dipeptidyl peptidase 10</fullName>
    </recommendedName>
    <alternativeName>
        <fullName>Dipeptidyl peptidase X</fullName>
        <shortName>DPP X</shortName>
    </alternativeName>
</protein>
<evidence type="ECO:0000250" key="1">
    <source>
        <dbReference type="UniProtKB" id="Q8N608"/>
    </source>
</evidence>
<evidence type="ECO:0000255" key="2"/>
<evidence type="ECO:0000256" key="3">
    <source>
        <dbReference type="SAM" id="MobiDB-lite"/>
    </source>
</evidence>
<evidence type="ECO:0000269" key="4">
    <source>
    </source>
</evidence>
<evidence type="ECO:0000269" key="5">
    <source>
    </source>
</evidence>
<evidence type="ECO:0000305" key="6"/>
<sequence>MKQEQQPTPGARATQSQPADQELGSNSPPQRNWKGIAIALLVILVVCSLITMSVILLTPDELTNSSETRLSLEELLGKGFGLHNPEPRWINDTVVVYKTNNGHVMKLNTESNASTLLLDNSTFVTFKASRHSLSPDLKYVLLAYDVKQIFHYSFTASYLIYNIHTGEVWELNPPEVEDSVLQYAAWGVQGQQLIYIFENNIYYQPDIKSSSLRLTSSGKEGIIFNGIADWLYEEELLHSHIAHWWSPDGERLAFLMINDSLVPNMIIPRFTGALYPKAKQYPYPKAGQANPSVKLYVVNLYGPTHTLELMPPDIFKSREYYITMVKWVSNTRTVVRWLNRPQNISILTLCESTTGACSRKYEMTSDTWLSKQNEEPVFSRDGSKFFMTVPVKQGGRGEFHHIAMFLVQSKSEQITVRHLTSGNWEVIRILAYDETTQKIYFLSTESSPQGRQLYSASTEGLLNRDCISCNFMKEDCTYFDASFSPMNQHFLLFCEGPKVPVVSLHITDNPSRYFLLENNSVMKETIQKKKLAKRETRILHIDDYELPLQLSFPKDFMEKNQYALLLIMDEEPGGQMVTDKFHVDWDSVLIDTDNVIVARFDGRGSGFQGLKVLQEIHRRIGSVEAKDQVAAVKYLLKQPYIDSKRLSIFGKGYGGYIASMILKSDEKFFKCGAVVAPISDMKLYASAFSERYLGMPSKEESTYQASSVLHNIHGLKEENLLIIHGTADTKVHFQHSAELIKHLIKAGVNYTLQVYPDEGYHISDKSKHHFYSTILRFFSDCLKEEVSVLPQEPEEDE</sequence>
<organism>
    <name type="scientific">Mus musculus</name>
    <name type="common">Mouse</name>
    <dbReference type="NCBI Taxonomy" id="10090"/>
    <lineage>
        <taxon>Eukaryota</taxon>
        <taxon>Metazoa</taxon>
        <taxon>Chordata</taxon>
        <taxon>Craniata</taxon>
        <taxon>Vertebrata</taxon>
        <taxon>Euteleostomi</taxon>
        <taxon>Mammalia</taxon>
        <taxon>Eutheria</taxon>
        <taxon>Euarchontoglires</taxon>
        <taxon>Glires</taxon>
        <taxon>Rodentia</taxon>
        <taxon>Myomorpha</taxon>
        <taxon>Muroidea</taxon>
        <taxon>Muridae</taxon>
        <taxon>Murinae</taxon>
        <taxon>Mus</taxon>
        <taxon>Mus</taxon>
    </lineage>
</organism>
<keyword id="KW-1003">Cell membrane</keyword>
<keyword id="KW-0325">Glycoprotein</keyword>
<keyword id="KW-0472">Membrane</keyword>
<keyword id="KW-0597">Phosphoprotein</keyword>
<keyword id="KW-1185">Reference proteome</keyword>
<keyword id="KW-0735">Signal-anchor</keyword>
<keyword id="KW-0812">Transmembrane</keyword>
<keyword id="KW-1133">Transmembrane helix</keyword>
<comment type="function">
    <text evidence="1 5 6">Promotes cell surface expression of the potassium channel KCND2 (PubMed:22311982). Modulates the activity and gating characteristics of the potassium channel KCND2 (PubMed:22311982). Has no dipeptidyl aminopeptidase activity (Probable).</text>
</comment>
<comment type="subunit">
    <text evidence="1">May form oligomers. Interacts with KCND1 and KCND2 (By similarity).</text>
</comment>
<comment type="subcellular location">
    <subcellularLocation>
        <location evidence="5">Cell membrane</location>
        <topology evidence="6">Single-pass type II membrane protein</topology>
    </subcellularLocation>
</comment>
<comment type="tissue specificity">
    <text evidence="4 5">Detected in brain cortex (at protein level) (PubMed:22311982). Expressed in the brain, predominantly by neurons and not by glia.</text>
</comment>
<comment type="PTM">
    <text evidence="1">N-glycosylation is important for cell surface expression, specially at Asn-258, which is crucial.</text>
</comment>
<comment type="similarity">
    <text evidence="6">Belongs to the peptidase S9B family. DPPIV subfamily.</text>
</comment>
<comment type="caution">
    <text evidence="6">Gly-652 is present instead of the conserved Ser which is expected to be an active site residue suggesting that this protein has no peptidase activity.</text>
</comment>
<comment type="sequence caution" evidence="6">
    <conflict type="erroneous initiation">
        <sequence resource="EMBL-CDS" id="AAH63074"/>
    </conflict>
</comment>